<dbReference type="EC" id="3.1.-.-" evidence="1"/>
<dbReference type="EMBL" id="CP000736">
    <property type="protein sequence ID" value="ABR51841.1"/>
    <property type="molecule type" value="Genomic_DNA"/>
</dbReference>
<dbReference type="SMR" id="A6U073"/>
<dbReference type="KEGG" id="sah:SaurJH1_0985"/>
<dbReference type="HOGENOM" id="CLU_007838_0_0_9"/>
<dbReference type="GO" id="GO:0051539">
    <property type="term" value="F:4 iron, 4 sulfur cluster binding"/>
    <property type="evidence" value="ECO:0007669"/>
    <property type="project" value="UniProtKB-KW"/>
</dbReference>
<dbReference type="GO" id="GO:0008409">
    <property type="term" value="F:5'-3' exonuclease activity"/>
    <property type="evidence" value="ECO:0007669"/>
    <property type="project" value="UniProtKB-UniRule"/>
</dbReference>
<dbReference type="GO" id="GO:0005524">
    <property type="term" value="F:ATP binding"/>
    <property type="evidence" value="ECO:0007669"/>
    <property type="project" value="UniProtKB-UniRule"/>
</dbReference>
<dbReference type="GO" id="GO:0003690">
    <property type="term" value="F:double-stranded DNA binding"/>
    <property type="evidence" value="ECO:0007669"/>
    <property type="project" value="UniProtKB-UniRule"/>
</dbReference>
<dbReference type="GO" id="GO:0004386">
    <property type="term" value="F:helicase activity"/>
    <property type="evidence" value="ECO:0007669"/>
    <property type="project" value="UniProtKB-KW"/>
</dbReference>
<dbReference type="GO" id="GO:0046872">
    <property type="term" value="F:metal ion binding"/>
    <property type="evidence" value="ECO:0007669"/>
    <property type="project" value="UniProtKB-KW"/>
</dbReference>
<dbReference type="GO" id="GO:0000724">
    <property type="term" value="P:double-strand break repair via homologous recombination"/>
    <property type="evidence" value="ECO:0007669"/>
    <property type="project" value="UniProtKB-UniRule"/>
</dbReference>
<dbReference type="Gene3D" id="3.90.320.10">
    <property type="match status" value="1"/>
</dbReference>
<dbReference type="Gene3D" id="3.40.50.300">
    <property type="entry name" value="P-loop containing nucleotide triphosphate hydrolases"/>
    <property type="match status" value="4"/>
</dbReference>
<dbReference type="HAMAP" id="MF_01452">
    <property type="entry name" value="AddB_type1"/>
    <property type="match status" value="1"/>
</dbReference>
<dbReference type="InterPro" id="IPR049035">
    <property type="entry name" value="ADDB_N"/>
</dbReference>
<dbReference type="InterPro" id="IPR014140">
    <property type="entry name" value="DNA_helicase_suAddB"/>
</dbReference>
<dbReference type="InterPro" id="IPR014017">
    <property type="entry name" value="DNA_helicase_UvrD-like_C"/>
</dbReference>
<dbReference type="InterPro" id="IPR027417">
    <property type="entry name" value="P-loop_NTPase"/>
</dbReference>
<dbReference type="InterPro" id="IPR011604">
    <property type="entry name" value="PDDEXK-like_dom_sf"/>
</dbReference>
<dbReference type="InterPro" id="IPR038726">
    <property type="entry name" value="PDDEXK_AddAB-type"/>
</dbReference>
<dbReference type="NCBIfam" id="TIGR02773">
    <property type="entry name" value="addB_Gpos"/>
    <property type="match status" value="1"/>
</dbReference>
<dbReference type="PANTHER" id="PTHR30591">
    <property type="entry name" value="RECBCD ENZYME SUBUNIT RECC"/>
    <property type="match status" value="1"/>
</dbReference>
<dbReference type="PANTHER" id="PTHR30591:SF1">
    <property type="entry name" value="RECBCD ENZYME SUBUNIT RECC"/>
    <property type="match status" value="1"/>
</dbReference>
<dbReference type="Pfam" id="PF21445">
    <property type="entry name" value="ADDB_N"/>
    <property type="match status" value="1"/>
</dbReference>
<dbReference type="Pfam" id="PF12705">
    <property type="entry name" value="PDDEXK_1"/>
    <property type="match status" value="1"/>
</dbReference>
<dbReference type="Pfam" id="PF13361">
    <property type="entry name" value="UvrD_C"/>
    <property type="match status" value="1"/>
</dbReference>
<dbReference type="SUPFAM" id="SSF52540">
    <property type="entry name" value="P-loop containing nucleoside triphosphate hydrolases"/>
    <property type="match status" value="1"/>
</dbReference>
<dbReference type="PROSITE" id="PS51198">
    <property type="entry name" value="UVRD_HELICASE_ATP_BIND"/>
    <property type="match status" value="1"/>
</dbReference>
<dbReference type="PROSITE" id="PS51217">
    <property type="entry name" value="UVRD_HELICASE_CTER"/>
    <property type="match status" value="1"/>
</dbReference>
<organism>
    <name type="scientific">Staphylococcus aureus (strain JH1)</name>
    <dbReference type="NCBI Taxonomy" id="359787"/>
    <lineage>
        <taxon>Bacteria</taxon>
        <taxon>Bacillati</taxon>
        <taxon>Bacillota</taxon>
        <taxon>Bacilli</taxon>
        <taxon>Bacillales</taxon>
        <taxon>Staphylococcaceae</taxon>
        <taxon>Staphylococcus</taxon>
    </lineage>
</organism>
<evidence type="ECO:0000255" key="1">
    <source>
        <dbReference type="HAMAP-Rule" id="MF_01452"/>
    </source>
</evidence>
<feature type="chain" id="PRO_0000379206" description="ATP-dependent helicase/deoxyribonuclease subunit B">
    <location>
        <begin position="1"/>
        <end position="1157"/>
    </location>
</feature>
<feature type="domain" description="UvrD-like helicase ATP-binding" evidence="1">
    <location>
        <begin position="1"/>
        <end position="275"/>
    </location>
</feature>
<feature type="domain" description="UvrD-like helicase C-terminal" evidence="1">
    <location>
        <begin position="269"/>
        <end position="583"/>
    </location>
</feature>
<feature type="binding site" evidence="1">
    <location>
        <begin position="8"/>
        <end position="15"/>
    </location>
    <ligand>
        <name>ATP</name>
        <dbReference type="ChEBI" id="CHEBI:30616"/>
    </ligand>
</feature>
<feature type="binding site" evidence="1">
    <location>
        <position position="784"/>
    </location>
    <ligand>
        <name>[4Fe-4S] cluster</name>
        <dbReference type="ChEBI" id="CHEBI:49883"/>
    </ligand>
</feature>
<feature type="binding site" evidence="1">
    <location>
        <position position="1112"/>
    </location>
    <ligand>
        <name>[4Fe-4S] cluster</name>
        <dbReference type="ChEBI" id="CHEBI:49883"/>
    </ligand>
</feature>
<feature type="binding site" evidence="1">
    <location>
        <position position="1115"/>
    </location>
    <ligand>
        <name>[4Fe-4S] cluster</name>
        <dbReference type="ChEBI" id="CHEBI:49883"/>
    </ligand>
</feature>
<feature type="binding site" evidence="1">
    <location>
        <position position="1121"/>
    </location>
    <ligand>
        <name>[4Fe-4S] cluster</name>
        <dbReference type="ChEBI" id="CHEBI:49883"/>
    </ligand>
</feature>
<reference key="1">
    <citation type="submission" date="2007-06" db="EMBL/GenBank/DDBJ databases">
        <title>Complete sequence of chromosome of Staphylococcus aureus subsp. aureus JH1.</title>
        <authorList>
            <consortium name="US DOE Joint Genome Institute"/>
            <person name="Copeland A."/>
            <person name="Lucas S."/>
            <person name="Lapidus A."/>
            <person name="Barry K."/>
            <person name="Detter J.C."/>
            <person name="Glavina del Rio T."/>
            <person name="Hammon N."/>
            <person name="Israni S."/>
            <person name="Dalin E."/>
            <person name="Tice H."/>
            <person name="Pitluck S."/>
            <person name="Chain P."/>
            <person name="Malfatti S."/>
            <person name="Shin M."/>
            <person name="Vergez L."/>
            <person name="Schmutz J."/>
            <person name="Larimer F."/>
            <person name="Land M."/>
            <person name="Hauser L."/>
            <person name="Kyrpides N."/>
            <person name="Ivanova N."/>
            <person name="Tomasz A."/>
            <person name="Richardson P."/>
        </authorList>
    </citation>
    <scope>NUCLEOTIDE SEQUENCE [LARGE SCALE GENOMIC DNA]</scope>
    <source>
        <strain>JH1</strain>
    </source>
</reference>
<sequence>MTLHAYLGRAGTGKSTKMLTEIKQKMKADPLGDPIILIAPTQSTFQLEQAFVNDPELNGSLRTEVLHFERLSHRIFQEVGSYSEQKLSKAATEMMIYNIVQEQQKYLKLYQSQAKYYGFSEKLTEQIQDFKKYAVTPEHLEHFIADKNMQTRTKNKLEDIALIYREFEQRIQNEFITGEDSLQYFIDCMPKSEWLKRADIYIDGFHNFSTIEYLIIKGLIKYAKSVTIILTTDGNHDQFSLFRKPSEVLRHIEEIANELNISIERQYFNQLYRFNNQDLKHLEQEFDVLQINRVACQGHINILESATMREEINEIARRIIVDIRDKQLRYQDIAILYRDESYAYLFDSILPLYNIPYNIDTKRSMTHHPVMEMIRSLIEVIQSNWQVNPMLRLLKTDVLTASYLKSAYLVDLLENFVLERGIYGKRWLDDELFNVEHFSKMGRKAHKLTEDERNTFEQVVKLKKDVIDKILHFEKQMSQAETVKDFATAFYESMEYFELPNQLMTERDELDLNGNHEKAEEIDQIWNGLIQILDDLVLVFGDEPMSMERFLEVFDIGLEQLEFVMIPQTLDQVSIGTMDLAKVDNKQHVYLVGMNDGTMPQPVTASSLITDEEKKYFEQQANVELSPTSDILQMDEAFVCYVAMTRAKGDVTFSYSLMGSSGDDKEISPFLNQIQSLFNQLEITNIPQYHEVNPLSLMQHAKQTKITLFEALRAWLDDEIVADSWLDAYQVIRDSDHLNQGLDYLMSALTFDNETVKLGETLSKDLYGKEINASVSRFEGYQQCPFKHYASHGLKLNERTKYELQNFDLGDIFHSVLKYISERINGDFKQLDLKKIRQLTNEALEEILPKVQFNLLNSSAYYRYLSRRIGAIVETTLSALKYQGTYSKFMPKHFETSFRRKPRTNDELIAQTLTTTQGIPINIRGQIDRIDTYTKNDTSFVNIIDYKSSEGSATLDLTKVYYGMQMQMMTYMDIVLQNKQRLGLTDIVKPGGLLYFHVHEPRIKFKSWSDIDEDKLEQDLIKKFKLSGLVNADQTVIDALDIRLEPKFTSDIVPVGLNKDGSLSKRGSQVADEATIYKFIQHNKENFIETASNIMDGHTEVAPLKYKQKLPCAFCSYQSVCHVDGMIDSKRYRTVDETINPIEAIQNININDEFGGE</sequence>
<protein>
    <recommendedName>
        <fullName evidence="1">ATP-dependent helicase/deoxyribonuclease subunit B</fullName>
        <ecNumber evidence="1">3.1.-.-</ecNumber>
    </recommendedName>
    <alternativeName>
        <fullName evidence="1">ATP-dependent helicase/nuclease subunit AddB</fullName>
    </alternativeName>
</protein>
<comment type="function">
    <text evidence="1">The heterodimer acts as both an ATP-dependent DNA helicase and an ATP-dependent, dual-direction single-stranded exonuclease. Recognizes the chi site generating a DNA molecule suitable for the initiation of homologous recombination. The AddB subunit has 5' -&gt; 3' nuclease activity but not helicase activity.</text>
</comment>
<comment type="cofactor">
    <cofactor evidence="1">
        <name>Mg(2+)</name>
        <dbReference type="ChEBI" id="CHEBI:18420"/>
    </cofactor>
</comment>
<comment type="cofactor">
    <cofactor evidence="1">
        <name>[4Fe-4S] cluster</name>
        <dbReference type="ChEBI" id="CHEBI:49883"/>
    </cofactor>
    <text evidence="1">Binds 1 [4Fe-4S] cluster.</text>
</comment>
<comment type="subunit">
    <text evidence="1">Heterodimer of AddA and AddB.</text>
</comment>
<comment type="miscellaneous">
    <text evidence="1">Despite having conserved helicase domains, this subunit does not have helicase activity.</text>
</comment>
<comment type="similarity">
    <text evidence="1">Belongs to the helicase family. AddB/RexB type 1 subfamily.</text>
</comment>
<proteinExistence type="inferred from homology"/>
<keyword id="KW-0004">4Fe-4S</keyword>
<keyword id="KW-0067">ATP-binding</keyword>
<keyword id="KW-0227">DNA damage</keyword>
<keyword id="KW-0234">DNA repair</keyword>
<keyword id="KW-0238">DNA-binding</keyword>
<keyword id="KW-0269">Exonuclease</keyword>
<keyword id="KW-0347">Helicase</keyword>
<keyword id="KW-0378">Hydrolase</keyword>
<keyword id="KW-0408">Iron</keyword>
<keyword id="KW-0411">Iron-sulfur</keyword>
<keyword id="KW-0479">Metal-binding</keyword>
<keyword id="KW-0540">Nuclease</keyword>
<keyword id="KW-0547">Nucleotide-binding</keyword>
<gene>
    <name evidence="1" type="primary">addB</name>
    <name type="ordered locus">SaurJH1_0985</name>
</gene>
<name>ADDB_STAA2</name>
<accession>A6U073</accession>